<reference key="1">
    <citation type="journal article" date="2004" name="Nature">
        <title>Genome evolution in yeasts.</title>
        <authorList>
            <person name="Dujon B."/>
            <person name="Sherman D."/>
            <person name="Fischer G."/>
            <person name="Durrens P."/>
            <person name="Casaregola S."/>
            <person name="Lafontaine I."/>
            <person name="de Montigny J."/>
            <person name="Marck C."/>
            <person name="Neuveglise C."/>
            <person name="Talla E."/>
            <person name="Goffard N."/>
            <person name="Frangeul L."/>
            <person name="Aigle M."/>
            <person name="Anthouard V."/>
            <person name="Babour A."/>
            <person name="Barbe V."/>
            <person name="Barnay S."/>
            <person name="Blanchin S."/>
            <person name="Beckerich J.-M."/>
            <person name="Beyne E."/>
            <person name="Bleykasten C."/>
            <person name="Boisrame A."/>
            <person name="Boyer J."/>
            <person name="Cattolico L."/>
            <person name="Confanioleri F."/>
            <person name="de Daruvar A."/>
            <person name="Despons L."/>
            <person name="Fabre E."/>
            <person name="Fairhead C."/>
            <person name="Ferry-Dumazet H."/>
            <person name="Groppi A."/>
            <person name="Hantraye F."/>
            <person name="Hennequin C."/>
            <person name="Jauniaux N."/>
            <person name="Joyet P."/>
            <person name="Kachouri R."/>
            <person name="Kerrest A."/>
            <person name="Koszul R."/>
            <person name="Lemaire M."/>
            <person name="Lesur I."/>
            <person name="Ma L."/>
            <person name="Muller H."/>
            <person name="Nicaud J.-M."/>
            <person name="Nikolski M."/>
            <person name="Oztas S."/>
            <person name="Ozier-Kalogeropoulos O."/>
            <person name="Pellenz S."/>
            <person name="Potier S."/>
            <person name="Richard G.-F."/>
            <person name="Straub M.-L."/>
            <person name="Suleau A."/>
            <person name="Swennen D."/>
            <person name="Tekaia F."/>
            <person name="Wesolowski-Louvel M."/>
            <person name="Westhof E."/>
            <person name="Wirth B."/>
            <person name="Zeniou-Meyer M."/>
            <person name="Zivanovic Y."/>
            <person name="Bolotin-Fukuhara M."/>
            <person name="Thierry A."/>
            <person name="Bouchier C."/>
            <person name="Caudron B."/>
            <person name="Scarpelli C."/>
            <person name="Gaillardin C."/>
            <person name="Weissenbach J."/>
            <person name="Wincker P."/>
            <person name="Souciet J.-L."/>
        </authorList>
    </citation>
    <scope>NUCLEOTIDE SEQUENCE [LARGE SCALE GENOMIC DNA]</scope>
    <source>
        <strain>CLIB 122 / E 150</strain>
    </source>
</reference>
<organism>
    <name type="scientific">Yarrowia lipolytica (strain CLIB 122 / E 150)</name>
    <name type="common">Yeast</name>
    <name type="synonym">Candida lipolytica</name>
    <dbReference type="NCBI Taxonomy" id="284591"/>
    <lineage>
        <taxon>Eukaryota</taxon>
        <taxon>Fungi</taxon>
        <taxon>Dikarya</taxon>
        <taxon>Ascomycota</taxon>
        <taxon>Saccharomycotina</taxon>
        <taxon>Dipodascomycetes</taxon>
        <taxon>Dipodascales</taxon>
        <taxon>Dipodascales incertae sedis</taxon>
        <taxon>Yarrowia</taxon>
    </lineage>
</organism>
<name>PSF1_YARLI</name>
<accession>Q6CHE4</accession>
<gene>
    <name type="primary">PSF1</name>
    <name type="ordered locus">YALI0A09746g</name>
</gene>
<dbReference type="EMBL" id="CR382127">
    <property type="protein sequence ID" value="CAG83844.1"/>
    <property type="molecule type" value="Genomic_DNA"/>
</dbReference>
<dbReference type="RefSeq" id="XP_499917.1">
    <property type="nucleotide sequence ID" value="XM_499917.1"/>
</dbReference>
<dbReference type="SMR" id="Q6CHE4"/>
<dbReference type="FunCoup" id="Q6CHE4">
    <property type="interactions" value="449"/>
</dbReference>
<dbReference type="STRING" id="284591.Q6CHE4"/>
<dbReference type="EnsemblFungi" id="CAG83844">
    <property type="protein sequence ID" value="CAG83844"/>
    <property type="gene ID" value="YALI0_A09746g"/>
</dbReference>
<dbReference type="KEGG" id="yli:2905800"/>
<dbReference type="VEuPathDB" id="FungiDB:YALI0_A09746g"/>
<dbReference type="HOGENOM" id="CLU_079191_0_0_1"/>
<dbReference type="InParanoid" id="Q6CHE4"/>
<dbReference type="OMA" id="MFCEKAT"/>
<dbReference type="OrthoDB" id="72660at4891"/>
<dbReference type="Proteomes" id="UP000001300">
    <property type="component" value="Chromosome A"/>
</dbReference>
<dbReference type="GO" id="GO:0000811">
    <property type="term" value="C:GINS complex"/>
    <property type="evidence" value="ECO:0000318"/>
    <property type="project" value="GO_Central"/>
</dbReference>
<dbReference type="GO" id="GO:1902983">
    <property type="term" value="P:DNA strand elongation involved in mitotic DNA replication"/>
    <property type="evidence" value="ECO:0000318"/>
    <property type="project" value="GO_Central"/>
</dbReference>
<dbReference type="GO" id="GO:1902975">
    <property type="term" value="P:mitotic DNA replication initiation"/>
    <property type="evidence" value="ECO:0007669"/>
    <property type="project" value="EnsemblFungi"/>
</dbReference>
<dbReference type="CDD" id="cd11710">
    <property type="entry name" value="GINS_A_psf1"/>
    <property type="match status" value="1"/>
</dbReference>
<dbReference type="CDD" id="cd21696">
    <property type="entry name" value="GINS_B_Psf1"/>
    <property type="match status" value="1"/>
</dbReference>
<dbReference type="Gene3D" id="1.20.58.1030">
    <property type="match status" value="1"/>
</dbReference>
<dbReference type="InterPro" id="IPR021151">
    <property type="entry name" value="GINS_A"/>
</dbReference>
<dbReference type="InterPro" id="IPR036224">
    <property type="entry name" value="GINS_bundle-like_dom_sf"/>
</dbReference>
<dbReference type="InterPro" id="IPR005339">
    <property type="entry name" value="GINS_Psf1"/>
</dbReference>
<dbReference type="InterPro" id="IPR056783">
    <property type="entry name" value="PSF1_C"/>
</dbReference>
<dbReference type="PANTHER" id="PTHR12914:SF2">
    <property type="entry name" value="DNA REPLICATION COMPLEX GINS PROTEIN PSF1"/>
    <property type="match status" value="1"/>
</dbReference>
<dbReference type="PANTHER" id="PTHR12914">
    <property type="entry name" value="PARTNER OF SLD5"/>
    <property type="match status" value="1"/>
</dbReference>
<dbReference type="Pfam" id="PF24997">
    <property type="entry name" value="PSF1_C"/>
    <property type="match status" value="1"/>
</dbReference>
<dbReference type="Pfam" id="PF05916">
    <property type="entry name" value="Sld5"/>
    <property type="match status" value="1"/>
</dbReference>
<dbReference type="SUPFAM" id="SSF158573">
    <property type="entry name" value="GINS helical bundle-like"/>
    <property type="match status" value="1"/>
</dbReference>
<keyword id="KW-0235">DNA replication</keyword>
<keyword id="KW-0539">Nucleus</keyword>
<keyword id="KW-1185">Reference proteome</keyword>
<protein>
    <recommendedName>
        <fullName>DNA replication complex GINS protein PSF1</fullName>
    </recommendedName>
</protein>
<sequence length="186" mass="21477">MLGDTALKLVHDSRRTAALDLLPAYQEELVRGVCREIRQLDASINKTQDEPGYDPQDRVAHCNLLVQHLAMRRDKRCLLAYQFTRARRMNEAAWKQTEEPNLNGNEQEYMKAYEDLIVDIKGPYTDIDLTGSLEPPNDVFIDVRVLQSVGEVQTEYGVFNLEKDSQFFVRRSDVQTLLLQGYLKEI</sequence>
<feature type="chain" id="PRO_0000278406" description="DNA replication complex GINS protein PSF1">
    <location>
        <begin position="1"/>
        <end position="186"/>
    </location>
</feature>
<comment type="function">
    <text evidence="1">The GINS complex plays an essential role in the initiation of DNA replication.</text>
</comment>
<comment type="subunit">
    <text evidence="1">Component of the GINS complex which is a heterotetramer of SLD5, PSF1, PSF2 and PSF3.</text>
</comment>
<comment type="subcellular location">
    <subcellularLocation>
        <location evidence="1">Nucleus</location>
    </subcellularLocation>
</comment>
<comment type="similarity">
    <text evidence="2">Belongs to the GINS1/PSF1 family.</text>
</comment>
<proteinExistence type="inferred from homology"/>
<evidence type="ECO:0000250" key="1"/>
<evidence type="ECO:0000305" key="2"/>